<organism>
    <name type="scientific">Rhodopirellula baltica (strain DSM 10527 / NCIMB 13988 / SH1)</name>
    <dbReference type="NCBI Taxonomy" id="243090"/>
    <lineage>
        <taxon>Bacteria</taxon>
        <taxon>Pseudomonadati</taxon>
        <taxon>Planctomycetota</taxon>
        <taxon>Planctomycetia</taxon>
        <taxon>Pirellulales</taxon>
        <taxon>Pirellulaceae</taxon>
        <taxon>Rhodopirellula</taxon>
    </lineage>
</organism>
<comment type="function">
    <text evidence="1">Catalyzes the reversible oxidation of malate to oxaloacetate.</text>
</comment>
<comment type="catalytic activity">
    <reaction evidence="1">
        <text>(S)-malate + NAD(+) = oxaloacetate + NADH + H(+)</text>
        <dbReference type="Rhea" id="RHEA:21432"/>
        <dbReference type="ChEBI" id="CHEBI:15378"/>
        <dbReference type="ChEBI" id="CHEBI:15589"/>
        <dbReference type="ChEBI" id="CHEBI:16452"/>
        <dbReference type="ChEBI" id="CHEBI:57540"/>
        <dbReference type="ChEBI" id="CHEBI:57945"/>
        <dbReference type="EC" id="1.1.1.37"/>
    </reaction>
</comment>
<comment type="similarity">
    <text evidence="1">Belongs to the LDH/MDH superfamily. MDH type 3 family.</text>
</comment>
<evidence type="ECO:0000255" key="1">
    <source>
        <dbReference type="HAMAP-Rule" id="MF_00487"/>
    </source>
</evidence>
<protein>
    <recommendedName>
        <fullName evidence="1">Malate dehydrogenase</fullName>
        <ecNumber evidence="1">1.1.1.37</ecNumber>
    </recommendedName>
</protein>
<gene>
    <name evidence="1" type="primary">mdh</name>
    <name type="ordered locus">RB7652</name>
</gene>
<dbReference type="EC" id="1.1.1.37" evidence="1"/>
<dbReference type="EMBL" id="BX294146">
    <property type="protein sequence ID" value="CAD75493.1"/>
    <property type="molecule type" value="Genomic_DNA"/>
</dbReference>
<dbReference type="RefSeq" id="NP_867946.1">
    <property type="nucleotide sequence ID" value="NC_005027.1"/>
</dbReference>
<dbReference type="RefSeq" id="WP_007325654.1">
    <property type="nucleotide sequence ID" value="NC_005027.1"/>
</dbReference>
<dbReference type="SMR" id="Q7UNC6"/>
<dbReference type="FunCoup" id="Q7UNC6">
    <property type="interactions" value="468"/>
</dbReference>
<dbReference type="STRING" id="243090.RB7652"/>
<dbReference type="EnsemblBacteria" id="CAD75493">
    <property type="protein sequence ID" value="CAD75493"/>
    <property type="gene ID" value="RB7652"/>
</dbReference>
<dbReference type="KEGG" id="rba:RB7652"/>
<dbReference type="PATRIC" id="fig|243090.15.peg.3699"/>
<dbReference type="eggNOG" id="COG0039">
    <property type="taxonomic scope" value="Bacteria"/>
</dbReference>
<dbReference type="HOGENOM" id="CLU_045401_2_1_0"/>
<dbReference type="InParanoid" id="Q7UNC6"/>
<dbReference type="OrthoDB" id="9802969at2"/>
<dbReference type="Proteomes" id="UP000001025">
    <property type="component" value="Chromosome"/>
</dbReference>
<dbReference type="GO" id="GO:0005737">
    <property type="term" value="C:cytoplasm"/>
    <property type="evidence" value="ECO:0000318"/>
    <property type="project" value="GO_Central"/>
</dbReference>
<dbReference type="GO" id="GO:0030060">
    <property type="term" value="F:L-malate dehydrogenase (NAD+) activity"/>
    <property type="evidence" value="ECO:0000318"/>
    <property type="project" value="GO_Central"/>
</dbReference>
<dbReference type="GO" id="GO:0019752">
    <property type="term" value="P:carboxylic acid metabolic process"/>
    <property type="evidence" value="ECO:0007669"/>
    <property type="project" value="InterPro"/>
</dbReference>
<dbReference type="GO" id="GO:0006099">
    <property type="term" value="P:tricarboxylic acid cycle"/>
    <property type="evidence" value="ECO:0007669"/>
    <property type="project" value="UniProtKB-UniRule"/>
</dbReference>
<dbReference type="CDD" id="cd01339">
    <property type="entry name" value="LDH-like_MDH"/>
    <property type="match status" value="1"/>
</dbReference>
<dbReference type="FunFam" id="3.40.50.720:FF:000018">
    <property type="entry name" value="Malate dehydrogenase"/>
    <property type="match status" value="1"/>
</dbReference>
<dbReference type="FunFam" id="3.90.110.10:FF:000004">
    <property type="entry name" value="Malate dehydrogenase"/>
    <property type="match status" value="1"/>
</dbReference>
<dbReference type="Gene3D" id="3.90.110.10">
    <property type="entry name" value="Lactate dehydrogenase/glycoside hydrolase, family 4, C-terminal"/>
    <property type="match status" value="1"/>
</dbReference>
<dbReference type="Gene3D" id="3.40.50.720">
    <property type="entry name" value="NAD(P)-binding Rossmann-like Domain"/>
    <property type="match status" value="1"/>
</dbReference>
<dbReference type="HAMAP" id="MF_00487">
    <property type="entry name" value="Malate_dehydrog_3"/>
    <property type="match status" value="1"/>
</dbReference>
<dbReference type="InterPro" id="IPR001557">
    <property type="entry name" value="L-lactate/malate_DH"/>
</dbReference>
<dbReference type="InterPro" id="IPR022383">
    <property type="entry name" value="Lactate/malate_DH_C"/>
</dbReference>
<dbReference type="InterPro" id="IPR001236">
    <property type="entry name" value="Lactate/malate_DH_N"/>
</dbReference>
<dbReference type="InterPro" id="IPR015955">
    <property type="entry name" value="Lactate_DH/Glyco_Ohase_4_C"/>
</dbReference>
<dbReference type="InterPro" id="IPR011275">
    <property type="entry name" value="Malate_DH_type3"/>
</dbReference>
<dbReference type="InterPro" id="IPR036291">
    <property type="entry name" value="NAD(P)-bd_dom_sf"/>
</dbReference>
<dbReference type="NCBIfam" id="TIGR01763">
    <property type="entry name" value="MalateDH_bact"/>
    <property type="match status" value="1"/>
</dbReference>
<dbReference type="NCBIfam" id="NF004863">
    <property type="entry name" value="PRK06223.1"/>
    <property type="match status" value="1"/>
</dbReference>
<dbReference type="PANTHER" id="PTHR43128">
    <property type="entry name" value="L-2-HYDROXYCARBOXYLATE DEHYDROGENASE (NAD(P)(+))"/>
    <property type="match status" value="1"/>
</dbReference>
<dbReference type="PANTHER" id="PTHR43128:SF16">
    <property type="entry name" value="L-LACTATE DEHYDROGENASE"/>
    <property type="match status" value="1"/>
</dbReference>
<dbReference type="Pfam" id="PF02866">
    <property type="entry name" value="Ldh_1_C"/>
    <property type="match status" value="1"/>
</dbReference>
<dbReference type="Pfam" id="PF00056">
    <property type="entry name" value="Ldh_1_N"/>
    <property type="match status" value="1"/>
</dbReference>
<dbReference type="PIRSF" id="PIRSF000102">
    <property type="entry name" value="Lac_mal_DH"/>
    <property type="match status" value="1"/>
</dbReference>
<dbReference type="PRINTS" id="PR00086">
    <property type="entry name" value="LLDHDRGNASE"/>
</dbReference>
<dbReference type="SUPFAM" id="SSF56327">
    <property type="entry name" value="LDH C-terminal domain-like"/>
    <property type="match status" value="1"/>
</dbReference>
<dbReference type="SUPFAM" id="SSF51735">
    <property type="entry name" value="NAD(P)-binding Rossmann-fold domains"/>
    <property type="match status" value="1"/>
</dbReference>
<sequence length="315" mass="33055">MRRAKITIVGAGNVGATCAHWCAAAELGDVVLLDIPRTEDMPRGKALDLMQASPIMGFDSNIVGTTDYADTADSDVIVVTAGLPRKPGMSRDDLLATNAKIVTSVAEEIKATSPNAVIIVVSNPLDAMVQQMFKVTGFEPAKVIGQAGVLDTARYRTFLAMELGVSVEDISALLMGGHGDTMVPVPSCTSVGGIPVTQLISKERLDEIVDRTRKGGAEIVSLLKTGSAYYAPAAACAQMVEAIVKDKKRVIPVAAYCDSEYGVGGYYVGVPVVLGSGGVERIIELSLTDEETKAFQNSVDAVKSLVSTMDGLLAE</sequence>
<proteinExistence type="inferred from homology"/>
<keyword id="KW-0520">NAD</keyword>
<keyword id="KW-0560">Oxidoreductase</keyword>
<keyword id="KW-1185">Reference proteome</keyword>
<keyword id="KW-0816">Tricarboxylic acid cycle</keyword>
<feature type="chain" id="PRO_0000113464" description="Malate dehydrogenase">
    <location>
        <begin position="1"/>
        <end position="315"/>
    </location>
</feature>
<feature type="active site" description="Proton acceptor" evidence="1">
    <location>
        <position position="178"/>
    </location>
</feature>
<feature type="binding site" evidence="1">
    <location>
        <begin position="10"/>
        <end position="15"/>
    </location>
    <ligand>
        <name>NAD(+)</name>
        <dbReference type="ChEBI" id="CHEBI:57540"/>
    </ligand>
</feature>
<feature type="binding site" evidence="1">
    <location>
        <position position="34"/>
    </location>
    <ligand>
        <name>NAD(+)</name>
        <dbReference type="ChEBI" id="CHEBI:57540"/>
    </ligand>
</feature>
<feature type="binding site" evidence="1">
    <location>
        <position position="85"/>
    </location>
    <ligand>
        <name>substrate</name>
    </ligand>
</feature>
<feature type="binding site" evidence="1">
    <location>
        <position position="91"/>
    </location>
    <ligand>
        <name>substrate</name>
    </ligand>
</feature>
<feature type="binding site" evidence="1">
    <location>
        <position position="98"/>
    </location>
    <ligand>
        <name>NAD(+)</name>
        <dbReference type="ChEBI" id="CHEBI:57540"/>
    </ligand>
</feature>
<feature type="binding site" evidence="1">
    <location>
        <begin position="121"/>
        <end position="123"/>
    </location>
    <ligand>
        <name>NAD(+)</name>
        <dbReference type="ChEBI" id="CHEBI:57540"/>
    </ligand>
</feature>
<feature type="binding site" evidence="1">
    <location>
        <position position="123"/>
    </location>
    <ligand>
        <name>substrate</name>
    </ligand>
</feature>
<feature type="binding site" evidence="1">
    <location>
        <position position="154"/>
    </location>
    <ligand>
        <name>substrate</name>
    </ligand>
</feature>
<accession>Q7UNC6</accession>
<name>MDH_RHOBA</name>
<reference key="1">
    <citation type="journal article" date="2003" name="Proc. Natl. Acad. Sci. U.S.A.">
        <title>Complete genome sequence of the marine planctomycete Pirellula sp. strain 1.</title>
        <authorList>
            <person name="Gloeckner F.O."/>
            <person name="Kube M."/>
            <person name="Bauer M."/>
            <person name="Teeling H."/>
            <person name="Lombardot T."/>
            <person name="Ludwig W."/>
            <person name="Gade D."/>
            <person name="Beck A."/>
            <person name="Borzym K."/>
            <person name="Heitmann K."/>
            <person name="Rabus R."/>
            <person name="Schlesner H."/>
            <person name="Amann R."/>
            <person name="Reinhardt R."/>
        </authorList>
    </citation>
    <scope>NUCLEOTIDE SEQUENCE [LARGE SCALE GENOMIC DNA]</scope>
    <source>
        <strain>DSM 10527 / NCIMB 13988 / SH1</strain>
    </source>
</reference>